<dbReference type="EMBL" id="LT708304">
    <property type="protein sequence ID" value="SIT98770.1"/>
    <property type="molecule type" value="Genomic_DNA"/>
</dbReference>
<dbReference type="RefSeq" id="NP_853926.1">
    <property type="nucleotide sequence ID" value="NC_002945.3"/>
</dbReference>
<dbReference type="RefSeq" id="WP_003899877.1">
    <property type="nucleotide sequence ID" value="NC_002945.4"/>
</dbReference>
<dbReference type="PATRIC" id="fig|233413.5.peg.288"/>
<dbReference type="UniPathway" id="UPA00148"/>
<dbReference type="Proteomes" id="UP000001419">
    <property type="component" value="Chromosome"/>
</dbReference>
<dbReference type="GO" id="GO:0015420">
    <property type="term" value="F:ABC-type vitamin B12 transporter activity"/>
    <property type="evidence" value="ECO:0007669"/>
    <property type="project" value="UniProtKB-UniRule"/>
</dbReference>
<dbReference type="GO" id="GO:0003824">
    <property type="term" value="F:catalytic activity"/>
    <property type="evidence" value="ECO:0007669"/>
    <property type="project" value="InterPro"/>
</dbReference>
<dbReference type="GO" id="GO:0009236">
    <property type="term" value="P:cobalamin biosynthetic process"/>
    <property type="evidence" value="ECO:0007669"/>
    <property type="project" value="UniProtKB-UniRule"/>
</dbReference>
<dbReference type="CDD" id="cd05389">
    <property type="entry name" value="CobQ_N"/>
    <property type="match status" value="1"/>
</dbReference>
<dbReference type="CDD" id="cd01750">
    <property type="entry name" value="GATase1_CobQ"/>
    <property type="match status" value="1"/>
</dbReference>
<dbReference type="Gene3D" id="3.40.50.880">
    <property type="match status" value="1"/>
</dbReference>
<dbReference type="Gene3D" id="3.40.50.300">
    <property type="entry name" value="P-loop containing nucleotide triphosphate hydrolases"/>
    <property type="match status" value="1"/>
</dbReference>
<dbReference type="HAMAP" id="MF_00028">
    <property type="entry name" value="CobQ"/>
    <property type="match status" value="1"/>
</dbReference>
<dbReference type="InterPro" id="IPR029062">
    <property type="entry name" value="Class_I_gatase-like"/>
</dbReference>
<dbReference type="InterPro" id="IPR002586">
    <property type="entry name" value="CobQ/CobB/MinD/ParA_Nub-bd_dom"/>
</dbReference>
<dbReference type="InterPro" id="IPR033949">
    <property type="entry name" value="CobQ_GATase1"/>
</dbReference>
<dbReference type="InterPro" id="IPR047045">
    <property type="entry name" value="CobQ_N"/>
</dbReference>
<dbReference type="InterPro" id="IPR004459">
    <property type="entry name" value="CobQ_synth"/>
</dbReference>
<dbReference type="InterPro" id="IPR011698">
    <property type="entry name" value="GATase_3"/>
</dbReference>
<dbReference type="InterPro" id="IPR027417">
    <property type="entry name" value="P-loop_NTPase"/>
</dbReference>
<dbReference type="NCBIfam" id="TIGR00313">
    <property type="entry name" value="cobQ"/>
    <property type="match status" value="1"/>
</dbReference>
<dbReference type="NCBIfam" id="NF001989">
    <property type="entry name" value="PRK00784.1"/>
    <property type="match status" value="1"/>
</dbReference>
<dbReference type="PANTHER" id="PTHR21343:SF1">
    <property type="entry name" value="COBYRIC ACID SYNTHASE"/>
    <property type="match status" value="1"/>
</dbReference>
<dbReference type="PANTHER" id="PTHR21343">
    <property type="entry name" value="DETHIOBIOTIN SYNTHETASE"/>
    <property type="match status" value="1"/>
</dbReference>
<dbReference type="Pfam" id="PF01656">
    <property type="entry name" value="CbiA"/>
    <property type="match status" value="1"/>
</dbReference>
<dbReference type="Pfam" id="PF07685">
    <property type="entry name" value="GATase_3"/>
    <property type="match status" value="1"/>
</dbReference>
<dbReference type="SUPFAM" id="SSF52317">
    <property type="entry name" value="Class I glutamine amidotransferase-like"/>
    <property type="match status" value="1"/>
</dbReference>
<dbReference type="SUPFAM" id="SSF52540">
    <property type="entry name" value="P-loop containing nucleoside triphosphate hydrolases"/>
    <property type="match status" value="1"/>
</dbReference>
<dbReference type="PROSITE" id="PS51274">
    <property type="entry name" value="GATASE_COBBQ"/>
    <property type="match status" value="1"/>
</dbReference>
<evidence type="ECO:0000250" key="1"/>
<evidence type="ECO:0000305" key="2"/>
<reference key="1">
    <citation type="journal article" date="2003" name="Proc. Natl. Acad. Sci. U.S.A.">
        <title>The complete genome sequence of Mycobacterium bovis.</title>
        <authorList>
            <person name="Garnier T."/>
            <person name="Eiglmeier K."/>
            <person name="Camus J.-C."/>
            <person name="Medina N."/>
            <person name="Mansoor H."/>
            <person name="Pryor M."/>
            <person name="Duthoy S."/>
            <person name="Grondin S."/>
            <person name="Lacroix C."/>
            <person name="Monsempe C."/>
            <person name="Simon S."/>
            <person name="Harris B."/>
            <person name="Atkin R."/>
            <person name="Doggett J."/>
            <person name="Mayes R."/>
            <person name="Keating L."/>
            <person name="Wheeler P.R."/>
            <person name="Parkhill J."/>
            <person name="Barrell B.G."/>
            <person name="Cole S.T."/>
            <person name="Gordon S.V."/>
            <person name="Hewinson R.G."/>
        </authorList>
    </citation>
    <scope>NUCLEOTIDE SEQUENCE [LARGE SCALE GENOMIC DNA]</scope>
    <source>
        <strain>ATCC BAA-935 / AF2122/97</strain>
    </source>
</reference>
<reference key="2">
    <citation type="journal article" date="2017" name="Genome Announc.">
        <title>Updated reference genome sequence and annotation of Mycobacterium bovis AF2122/97.</title>
        <authorList>
            <person name="Malone K.M."/>
            <person name="Farrell D."/>
            <person name="Stuber T.P."/>
            <person name="Schubert O.T."/>
            <person name="Aebersold R."/>
            <person name="Robbe-Austerman S."/>
            <person name="Gordon S.V."/>
        </authorList>
    </citation>
    <scope>NUCLEOTIDE SEQUENCE [LARGE SCALE GENOMIC DNA]</scope>
    <scope>GENOME REANNOTATION</scope>
    <source>
        <strain>ATCC BAA-935 / AF2122/97</strain>
    </source>
</reference>
<name>COBQ_MYCBO</name>
<keyword id="KW-0169">Cobalamin biosynthesis</keyword>
<keyword id="KW-0315">Glutamine amidotransferase</keyword>
<keyword id="KW-1185">Reference proteome</keyword>
<sequence>MSGLLVAGTTSDAGKSAVTAGLCRALARRGVRVAPFKAQNMSNNSMVCRGPDGTGVEIGRAQWVQALAARTTPEAAMNPVLLKPASDHRSHVVLMGKPWGEVASSSWCAGRRALAEAACRAFDALAARYDVVVAEGAGSPAEINLRAGDYVNMGLARHAGLPTIVVGDIDRGGVFAAFLGTVALLAAEDQALVAGFVVNKFRGDSDLLAPGLRDLERVTGRRVYGTLPWHPDLWLDSEDALDLQGRRAAGTGARRVAVVRLPRISNFTDVDALGLEPDLDVVFASDPRALDDADLIVLPGTRATIADLAWLRARDLDRALLVHVAAGKPLLGICGGFQMLGRVIRDPYGIEGPGGQVTEVEGLGLLDVETAFSPHKVLRLPRGEGLGVPASGYEIHHGRITRGDTAEEFLGGARDGPVFGTMWHGSLEGDALREAFLRETLGLAPSGSCFLAARERRLDLLGDLVERHLDVDALLNLARHGCPPTLPFLAPGAP</sequence>
<feature type="chain" id="PRO_0000141310" description="Cobyric acid synthase">
    <location>
        <begin position="1"/>
        <end position="494"/>
    </location>
</feature>
<feature type="domain" description="GATase cobBQ-type">
    <location>
        <begin position="253"/>
        <end position="432"/>
    </location>
</feature>
<feature type="active site" description="Nucleophile" evidence="1">
    <location>
        <position position="334"/>
    </location>
</feature>
<feature type="active site" evidence="1">
    <location>
        <position position="424"/>
    </location>
</feature>
<gene>
    <name type="primary">cobQ</name>
    <name type="synonym">cbiP</name>
    <name type="ordered locus">BQ2027_MB0261C</name>
</gene>
<protein>
    <recommendedName>
        <fullName>Cobyric acid synthase</fullName>
    </recommendedName>
</protein>
<comment type="function">
    <text evidence="1">Catalyzes amidations at positions B, D, E, and G on adenosylcobyrinic A,C-diamide. NH(2) groups are provided by glutamine, and one molecule of ATP is hydrogenolyzed for each amidation (By similarity).</text>
</comment>
<comment type="pathway">
    <text>Cofactor biosynthesis; adenosylcobalamin biosynthesis.</text>
</comment>
<comment type="similarity">
    <text evidence="2">Belongs to the CobB/CobQ family. CobQ subfamily.</text>
</comment>
<accession>P0A533</accession>
<accession>A0A1R3XUS8</accession>
<accession>O53677</accession>
<accession>X2BEI1</accession>
<proteinExistence type="inferred from homology"/>
<organism>
    <name type="scientific">Mycobacterium bovis (strain ATCC BAA-935 / AF2122/97)</name>
    <dbReference type="NCBI Taxonomy" id="233413"/>
    <lineage>
        <taxon>Bacteria</taxon>
        <taxon>Bacillati</taxon>
        <taxon>Actinomycetota</taxon>
        <taxon>Actinomycetes</taxon>
        <taxon>Mycobacteriales</taxon>
        <taxon>Mycobacteriaceae</taxon>
        <taxon>Mycobacterium</taxon>
        <taxon>Mycobacterium tuberculosis complex</taxon>
    </lineage>
</organism>